<comment type="function">
    <text evidence="1">Transfers the gamma-phosphate of ATP to the 4'-position of a tetraacyldisaccharide 1-phosphate intermediate (termed DS-1-P) to form tetraacyldisaccharide 1,4'-bis-phosphate (lipid IVA).</text>
</comment>
<comment type="catalytic activity">
    <reaction evidence="1">
        <text>a lipid A disaccharide + ATP = a lipid IVA + ADP + H(+)</text>
        <dbReference type="Rhea" id="RHEA:67840"/>
        <dbReference type="ChEBI" id="CHEBI:15378"/>
        <dbReference type="ChEBI" id="CHEBI:30616"/>
        <dbReference type="ChEBI" id="CHEBI:176343"/>
        <dbReference type="ChEBI" id="CHEBI:176425"/>
        <dbReference type="ChEBI" id="CHEBI:456216"/>
        <dbReference type="EC" id="2.7.1.130"/>
    </reaction>
</comment>
<comment type="pathway">
    <text evidence="1">Glycolipid biosynthesis; lipid IV(A) biosynthesis; lipid IV(A) from (3R)-3-hydroxytetradecanoyl-[acyl-carrier-protein] and UDP-N-acetyl-alpha-D-glucosamine: step 6/6.</text>
</comment>
<comment type="similarity">
    <text evidence="1">Belongs to the LpxK family.</text>
</comment>
<dbReference type="EC" id="2.7.1.130" evidence="1"/>
<dbReference type="EMBL" id="CP000608">
    <property type="protein sequence ID" value="ABO46169.1"/>
    <property type="molecule type" value="Genomic_DNA"/>
</dbReference>
<dbReference type="RefSeq" id="WP_003019528.1">
    <property type="nucleotide sequence ID" value="NC_009257.1"/>
</dbReference>
<dbReference type="SMR" id="A4IW67"/>
<dbReference type="KEGG" id="ftw:FTW_0195"/>
<dbReference type="HOGENOM" id="CLU_038816_2_0_6"/>
<dbReference type="UniPathway" id="UPA00359">
    <property type="reaction ID" value="UER00482"/>
</dbReference>
<dbReference type="GO" id="GO:0005886">
    <property type="term" value="C:plasma membrane"/>
    <property type="evidence" value="ECO:0007669"/>
    <property type="project" value="TreeGrafter"/>
</dbReference>
<dbReference type="GO" id="GO:0005524">
    <property type="term" value="F:ATP binding"/>
    <property type="evidence" value="ECO:0007669"/>
    <property type="project" value="UniProtKB-UniRule"/>
</dbReference>
<dbReference type="GO" id="GO:0009029">
    <property type="term" value="F:tetraacyldisaccharide 4'-kinase activity"/>
    <property type="evidence" value="ECO:0007669"/>
    <property type="project" value="UniProtKB-UniRule"/>
</dbReference>
<dbReference type="GO" id="GO:0009245">
    <property type="term" value="P:lipid A biosynthetic process"/>
    <property type="evidence" value="ECO:0007669"/>
    <property type="project" value="UniProtKB-UniRule"/>
</dbReference>
<dbReference type="GO" id="GO:0009244">
    <property type="term" value="P:lipopolysaccharide core region biosynthetic process"/>
    <property type="evidence" value="ECO:0007669"/>
    <property type="project" value="TreeGrafter"/>
</dbReference>
<dbReference type="HAMAP" id="MF_00409">
    <property type="entry name" value="LpxK"/>
    <property type="match status" value="1"/>
</dbReference>
<dbReference type="InterPro" id="IPR003758">
    <property type="entry name" value="LpxK"/>
</dbReference>
<dbReference type="InterPro" id="IPR027417">
    <property type="entry name" value="P-loop_NTPase"/>
</dbReference>
<dbReference type="NCBIfam" id="TIGR00682">
    <property type="entry name" value="lpxK"/>
    <property type="match status" value="1"/>
</dbReference>
<dbReference type="PANTHER" id="PTHR42724">
    <property type="entry name" value="TETRAACYLDISACCHARIDE 4'-KINASE"/>
    <property type="match status" value="1"/>
</dbReference>
<dbReference type="PANTHER" id="PTHR42724:SF1">
    <property type="entry name" value="TETRAACYLDISACCHARIDE 4'-KINASE, MITOCHONDRIAL-RELATED"/>
    <property type="match status" value="1"/>
</dbReference>
<dbReference type="Pfam" id="PF02606">
    <property type="entry name" value="LpxK"/>
    <property type="match status" value="1"/>
</dbReference>
<dbReference type="SUPFAM" id="SSF52540">
    <property type="entry name" value="P-loop containing nucleoside triphosphate hydrolases"/>
    <property type="match status" value="1"/>
</dbReference>
<reference key="1">
    <citation type="journal article" date="2007" name="PLoS ONE">
        <title>Complete genomic characterization of a pathogenic A.II strain of Francisella tularensis subspecies tularensis.</title>
        <authorList>
            <person name="Beckstrom-Sternberg S.M."/>
            <person name="Auerbach R.K."/>
            <person name="Godbole S."/>
            <person name="Pearson J.V."/>
            <person name="Beckstrom-Sternberg J.S."/>
            <person name="Deng Z."/>
            <person name="Munk C."/>
            <person name="Kubota K."/>
            <person name="Zhou Y."/>
            <person name="Bruce D."/>
            <person name="Noronha J."/>
            <person name="Scheuermann R.H."/>
            <person name="Wang A."/>
            <person name="Wei X."/>
            <person name="Wang J."/>
            <person name="Hao J."/>
            <person name="Wagner D.M."/>
            <person name="Brettin T.S."/>
            <person name="Brown N."/>
            <person name="Gilna P."/>
            <person name="Keim P.S."/>
        </authorList>
    </citation>
    <scope>NUCLEOTIDE SEQUENCE [LARGE SCALE GENOMIC DNA]</scope>
    <source>
        <strain>WY96-3418</strain>
    </source>
</reference>
<name>LPXK_FRATW</name>
<organism>
    <name type="scientific">Francisella tularensis subsp. tularensis (strain WY96-3418)</name>
    <dbReference type="NCBI Taxonomy" id="418136"/>
    <lineage>
        <taxon>Bacteria</taxon>
        <taxon>Pseudomonadati</taxon>
        <taxon>Pseudomonadota</taxon>
        <taxon>Gammaproteobacteria</taxon>
        <taxon>Thiotrichales</taxon>
        <taxon>Francisellaceae</taxon>
        <taxon>Francisella</taxon>
    </lineage>
</organism>
<keyword id="KW-0067">ATP-binding</keyword>
<keyword id="KW-0418">Kinase</keyword>
<keyword id="KW-0441">Lipid A biosynthesis</keyword>
<keyword id="KW-0444">Lipid biosynthesis</keyword>
<keyword id="KW-0443">Lipid metabolism</keyword>
<keyword id="KW-0547">Nucleotide-binding</keyword>
<keyword id="KW-0808">Transferase</keyword>
<gene>
    <name evidence="1" type="primary">lpxK</name>
    <name type="ordered locus">FTW_0195</name>
</gene>
<evidence type="ECO:0000255" key="1">
    <source>
        <dbReference type="HAMAP-Rule" id="MF_00409"/>
    </source>
</evidence>
<proteinExistence type="inferred from homology"/>
<sequence>MLDKIWYRSKPNLLSRVLQPISLVFIDIANKRKIKQQLKQYKSKIPIIVVGNISVGGTGKTPVVRMLAQQYLAQDKKPAIISRGYGAKADNYPFEVTSGTLATQCGDEPAMLFDALQAQVPIVIAPERVQAVKYIEKNFPDTDIIMSDDGLQHYKLARDKEIVVVDAIRMFGNKLCLPAGPLREPIERLKEVDQIIVIGNCSDKDKELLKNYKNVTYAKVVATEFVNILTAKKVAKTEFNHQNAIAIAGIGNPTKFFKTLEESAINITAKKVFKDHHKFTQSDFEGIDSDITVVMTYKDAIKCKNFAKANWWYLDIALDINV</sequence>
<accession>A4IW67</accession>
<feature type="chain" id="PRO_1000049898" description="Tetraacyldisaccharide 4'-kinase">
    <location>
        <begin position="1"/>
        <end position="322"/>
    </location>
</feature>
<feature type="binding site" evidence="1">
    <location>
        <begin position="54"/>
        <end position="61"/>
    </location>
    <ligand>
        <name>ATP</name>
        <dbReference type="ChEBI" id="CHEBI:30616"/>
    </ligand>
</feature>
<protein>
    <recommendedName>
        <fullName evidence="1">Tetraacyldisaccharide 4'-kinase</fullName>
        <ecNumber evidence="1">2.7.1.130</ecNumber>
    </recommendedName>
    <alternativeName>
        <fullName evidence="1">Lipid A 4'-kinase</fullName>
    </alternativeName>
</protein>